<feature type="chain" id="PRO_0000304604" description="Mediator of RNA polymerase II transcription subunit 14">
    <location>
        <begin position="1"/>
        <end position="1108"/>
    </location>
</feature>
<feature type="region of interest" description="Disordered" evidence="2">
    <location>
        <begin position="1"/>
        <end position="30"/>
    </location>
</feature>
<feature type="region of interest" description="Disordered" evidence="2">
    <location>
        <begin position="35"/>
        <end position="54"/>
    </location>
</feature>
<feature type="region of interest" description="Disordered" evidence="2">
    <location>
        <begin position="1048"/>
        <end position="1108"/>
    </location>
</feature>
<feature type="compositionally biased region" description="Polar residues" evidence="2">
    <location>
        <begin position="35"/>
        <end position="52"/>
    </location>
</feature>
<feature type="compositionally biased region" description="Low complexity" evidence="2">
    <location>
        <begin position="1048"/>
        <end position="1080"/>
    </location>
</feature>
<organism>
    <name type="scientific">Pyricularia oryzae (strain 70-15 / ATCC MYA-4617 / FGSC 8958)</name>
    <name type="common">Rice blast fungus</name>
    <name type="synonym">Magnaporthe oryzae</name>
    <dbReference type="NCBI Taxonomy" id="242507"/>
    <lineage>
        <taxon>Eukaryota</taxon>
        <taxon>Fungi</taxon>
        <taxon>Dikarya</taxon>
        <taxon>Ascomycota</taxon>
        <taxon>Pezizomycotina</taxon>
        <taxon>Sordariomycetes</taxon>
        <taxon>Sordariomycetidae</taxon>
        <taxon>Magnaporthales</taxon>
        <taxon>Pyriculariaceae</taxon>
        <taxon>Pyricularia</taxon>
    </lineage>
</organism>
<comment type="function">
    <text evidence="1">Component of the Mediator complex, a coactivator involved in the regulated transcription of nearly all RNA polymerase II-dependent genes. Mediator functions as a bridge to convey information from gene-specific regulatory proteins to the basal RNA polymerase II transcription machinery. Mediator is recruited to promoters by direct interactions with regulatory proteins and serves as a scaffold for the assembly of a functional preinitiation complex with RNA polymerase II and the general transcription factors (By similarity).</text>
</comment>
<comment type="subunit">
    <text evidence="1">Component of the Mediator complex.</text>
</comment>
<comment type="subcellular location">
    <subcellularLocation>
        <location evidence="3">Nucleus</location>
    </subcellularLocation>
</comment>
<comment type="similarity">
    <text evidence="3">Belongs to the Mediator complex subunit 14 family.</text>
</comment>
<evidence type="ECO:0000250" key="1"/>
<evidence type="ECO:0000256" key="2">
    <source>
        <dbReference type="SAM" id="MobiDB-lite"/>
    </source>
</evidence>
<evidence type="ECO:0000305" key="3"/>
<dbReference type="EMBL" id="CM001231">
    <property type="protein sequence ID" value="EHA57413.1"/>
    <property type="molecule type" value="Genomic_DNA"/>
</dbReference>
<dbReference type="RefSeq" id="XP_003710025.1">
    <property type="nucleotide sequence ID" value="XM_003709977.1"/>
</dbReference>
<dbReference type="SMR" id="A4R0J9"/>
<dbReference type="STRING" id="242507.A4R0J9"/>
<dbReference type="EnsemblFungi" id="MGG_09925T0">
    <property type="protein sequence ID" value="MGG_09925T0"/>
    <property type="gene ID" value="MGG_09925"/>
</dbReference>
<dbReference type="GeneID" id="2680895"/>
<dbReference type="KEGG" id="mgr:MGG_09925"/>
<dbReference type="VEuPathDB" id="FungiDB:MGG_09925"/>
<dbReference type="eggNOG" id="KOG1875">
    <property type="taxonomic scope" value="Eukaryota"/>
</dbReference>
<dbReference type="HOGENOM" id="CLU_003573_1_0_1"/>
<dbReference type="InParanoid" id="A4R0J9"/>
<dbReference type="OMA" id="ITQGYIP"/>
<dbReference type="OrthoDB" id="205099at2759"/>
<dbReference type="Proteomes" id="UP000009058">
    <property type="component" value="Chromosome 1"/>
</dbReference>
<dbReference type="GO" id="GO:0070847">
    <property type="term" value="C:core mediator complex"/>
    <property type="evidence" value="ECO:0007669"/>
    <property type="project" value="TreeGrafter"/>
</dbReference>
<dbReference type="GO" id="GO:0016592">
    <property type="term" value="C:mediator complex"/>
    <property type="evidence" value="ECO:0007669"/>
    <property type="project" value="InterPro"/>
</dbReference>
<dbReference type="GO" id="GO:0003712">
    <property type="term" value="F:transcription coregulator activity"/>
    <property type="evidence" value="ECO:0007669"/>
    <property type="project" value="InterPro"/>
</dbReference>
<dbReference type="GO" id="GO:0006357">
    <property type="term" value="P:regulation of transcription by RNA polymerase II"/>
    <property type="evidence" value="ECO:0007669"/>
    <property type="project" value="InterPro"/>
</dbReference>
<dbReference type="InterPro" id="IPR055122">
    <property type="entry name" value="Med14_N"/>
</dbReference>
<dbReference type="InterPro" id="IPR013947">
    <property type="entry name" value="Mediator_Med14"/>
</dbReference>
<dbReference type="PANTHER" id="PTHR12809">
    <property type="entry name" value="MEDIATOR COMPLEX SUBUNIT"/>
    <property type="match status" value="1"/>
</dbReference>
<dbReference type="PANTHER" id="PTHR12809:SF2">
    <property type="entry name" value="MEDIATOR OF RNA POLYMERASE II TRANSCRIPTION SUBUNIT 14"/>
    <property type="match status" value="1"/>
</dbReference>
<dbReference type="Pfam" id="PF08638">
    <property type="entry name" value="Med14"/>
    <property type="match status" value="1"/>
</dbReference>
<gene>
    <name type="primary">RGR1</name>
    <name type="synonym">MED14</name>
    <name type="ORF">MGG_09925</name>
</gene>
<sequence length="1108" mass="125413">MAAVMMNGVGPDGAMKPNLDQKLNNHGGDTKAISSSEIVQQQTPARSLQSDNPLRMNDLPDEIVHITENFLSLNQLLSRLAQRSHNELEDTIRSLAKKPLPMPPMLNGNADHNTIEDLSNENLDKKVTLLKFAQEQHAKWVKALVITDWSKKASTLSKLIDLKVHMHTQMEKYDFVLDRMMHNKRNLAYARLPSPDLKTALEVLANGDAPWMPDLGYIPPPEMSPEDQLKWLEDLDTLLSLRLTIDDHDKIPYHFRNYRIGSGRVTFIVKGEFEVDLTIADDDPEKQYWFIDFRFLFRPAPPGLSENLRMYLELKVNEVLGAEGLAGCYKYLHELVLTHKINELRRQAMELSVGRWVDALNVERLNRSLAVQYWTSRYPAKAPNAPKSWIIIGVHSAAPSGGLRATAPTSRLALRWFRDNQEVKDIEIPLDEADLSMERILKDVIGRHTQQILTLMHTGLRNKPRFVNKEDHLVLELSRKQPSESLLTMQLTKLDSMVVRVDQIGGTFAVQPRTRPMPMAESNLNTPGRDPVAVIGWVRNTFAMEELVRRGKSQGWVVGKPPVKPDDLRNILSNREQTDAMAWFRKQGWRPQFYVLAHLSMSGDQWWLIELTTPNSNSAASTAGGIRIRTHVQLQFASKQAIMESPSFFSDLNYFTSAMISKMRDLRELHSRRINHIDQPCIRPGLSSNIRMPTIFIRTSEVLPSLSGKGSLGRWAADEVRLSVANVQSSSSTEVDRRGENRSALSTRMDSRIVIASEARLRVLDKSKFRQLSSRVDRDVAFNHKTGEFVLQLRSELGETMIDKLISRLQTIERLYEFLGSISRAPRGVQCETVTLRRVVFTYSDLPQPVSEELAALQPPTKRWKVVLDFADPRTVKLVLEKNNPHIRAVDMLQTLANSPRGLERLPFYLPTTLAVYRALDSISDAWLQLQVSRKGTFEIFTKNIDLATIRYDLPGPQARRLTLDVKLVSRRGELSWHVKRTDAEPNKSNDEFSRVLKEVWNTKSPNWKSLSTSACGPASAGVEELLKGIDKAVRTLLESPPLVLQQQQQRQPVVQPGQQPQVQNQANGVMNRGPQRPGLPGAGGLGAQMRQKQVPQAPMGNHVVDLT</sequence>
<name>MED14_PYRO7</name>
<accession>A4R0J9</accession>
<accession>G4MR81</accession>
<keyword id="KW-0010">Activator</keyword>
<keyword id="KW-0539">Nucleus</keyword>
<keyword id="KW-1185">Reference proteome</keyword>
<keyword id="KW-0804">Transcription</keyword>
<keyword id="KW-0805">Transcription regulation</keyword>
<proteinExistence type="inferred from homology"/>
<protein>
    <recommendedName>
        <fullName>Mediator of RNA polymerase II transcription subunit 14</fullName>
    </recommendedName>
    <alternativeName>
        <fullName>Mediator complex subunit 14</fullName>
    </alternativeName>
</protein>
<reference key="1">
    <citation type="journal article" date="2005" name="Nature">
        <title>The genome sequence of the rice blast fungus Magnaporthe grisea.</title>
        <authorList>
            <person name="Dean R.A."/>
            <person name="Talbot N.J."/>
            <person name="Ebbole D.J."/>
            <person name="Farman M.L."/>
            <person name="Mitchell T.K."/>
            <person name="Orbach M.J."/>
            <person name="Thon M.R."/>
            <person name="Kulkarni R."/>
            <person name="Xu J.-R."/>
            <person name="Pan H."/>
            <person name="Read N.D."/>
            <person name="Lee Y.-H."/>
            <person name="Carbone I."/>
            <person name="Brown D."/>
            <person name="Oh Y.Y."/>
            <person name="Donofrio N."/>
            <person name="Jeong J.S."/>
            <person name="Soanes D.M."/>
            <person name="Djonovic S."/>
            <person name="Kolomiets E."/>
            <person name="Rehmeyer C."/>
            <person name="Li W."/>
            <person name="Harding M."/>
            <person name="Kim S."/>
            <person name="Lebrun M.-H."/>
            <person name="Bohnert H."/>
            <person name="Coughlan S."/>
            <person name="Butler J."/>
            <person name="Calvo S.E."/>
            <person name="Ma L.-J."/>
            <person name="Nicol R."/>
            <person name="Purcell S."/>
            <person name="Nusbaum C."/>
            <person name="Galagan J.E."/>
            <person name="Birren B.W."/>
        </authorList>
    </citation>
    <scope>NUCLEOTIDE SEQUENCE [LARGE SCALE GENOMIC DNA]</scope>
    <source>
        <strain>70-15 / ATCC MYA-4617 / FGSC 8958</strain>
    </source>
</reference>